<proteinExistence type="inferred from homology"/>
<accession>A6QHF2</accession>
<feature type="chain" id="PRO_1000072558" description="Uridine kinase">
    <location>
        <begin position="1"/>
        <end position="207"/>
    </location>
</feature>
<feature type="binding site" evidence="1">
    <location>
        <begin position="11"/>
        <end position="18"/>
    </location>
    <ligand>
        <name>ATP</name>
        <dbReference type="ChEBI" id="CHEBI:30616"/>
    </ligand>
</feature>
<keyword id="KW-0067">ATP-binding</keyword>
<keyword id="KW-0963">Cytoplasm</keyword>
<keyword id="KW-0418">Kinase</keyword>
<keyword id="KW-0547">Nucleotide-binding</keyword>
<keyword id="KW-0808">Transferase</keyword>
<dbReference type="EC" id="2.7.1.48" evidence="1"/>
<dbReference type="EMBL" id="AP009351">
    <property type="protein sequence ID" value="BAF67784.1"/>
    <property type="molecule type" value="Genomic_DNA"/>
</dbReference>
<dbReference type="RefSeq" id="WP_000648617.1">
    <property type="nucleotide sequence ID" value="NZ_JBBIAE010000001.1"/>
</dbReference>
<dbReference type="SMR" id="A6QHF2"/>
<dbReference type="KEGG" id="sae:NWMN_1512"/>
<dbReference type="HOGENOM" id="CLU_021278_1_2_9"/>
<dbReference type="UniPathway" id="UPA00574">
    <property type="reaction ID" value="UER00637"/>
</dbReference>
<dbReference type="UniPathway" id="UPA00579">
    <property type="reaction ID" value="UER00640"/>
</dbReference>
<dbReference type="Proteomes" id="UP000006386">
    <property type="component" value="Chromosome"/>
</dbReference>
<dbReference type="GO" id="GO:0005737">
    <property type="term" value="C:cytoplasm"/>
    <property type="evidence" value="ECO:0007669"/>
    <property type="project" value="UniProtKB-SubCell"/>
</dbReference>
<dbReference type="GO" id="GO:0005524">
    <property type="term" value="F:ATP binding"/>
    <property type="evidence" value="ECO:0007669"/>
    <property type="project" value="UniProtKB-UniRule"/>
</dbReference>
<dbReference type="GO" id="GO:0043771">
    <property type="term" value="F:cytidine kinase activity"/>
    <property type="evidence" value="ECO:0007669"/>
    <property type="project" value="RHEA"/>
</dbReference>
<dbReference type="GO" id="GO:0004849">
    <property type="term" value="F:uridine kinase activity"/>
    <property type="evidence" value="ECO:0007669"/>
    <property type="project" value="UniProtKB-UniRule"/>
</dbReference>
<dbReference type="GO" id="GO:0044211">
    <property type="term" value="P:CTP salvage"/>
    <property type="evidence" value="ECO:0007669"/>
    <property type="project" value="UniProtKB-UniRule"/>
</dbReference>
<dbReference type="GO" id="GO:0044206">
    <property type="term" value="P:UMP salvage"/>
    <property type="evidence" value="ECO:0007669"/>
    <property type="project" value="UniProtKB-UniRule"/>
</dbReference>
<dbReference type="CDD" id="cd02023">
    <property type="entry name" value="UMPK"/>
    <property type="match status" value="1"/>
</dbReference>
<dbReference type="Gene3D" id="3.40.50.300">
    <property type="entry name" value="P-loop containing nucleotide triphosphate hydrolases"/>
    <property type="match status" value="1"/>
</dbReference>
<dbReference type="HAMAP" id="MF_00551">
    <property type="entry name" value="Uridine_kinase"/>
    <property type="match status" value="1"/>
</dbReference>
<dbReference type="InterPro" id="IPR027417">
    <property type="entry name" value="P-loop_NTPase"/>
</dbReference>
<dbReference type="InterPro" id="IPR006083">
    <property type="entry name" value="PRK/URK"/>
</dbReference>
<dbReference type="InterPro" id="IPR026008">
    <property type="entry name" value="Uridine_kinase"/>
</dbReference>
<dbReference type="InterPro" id="IPR000764">
    <property type="entry name" value="Uridine_kinase-like"/>
</dbReference>
<dbReference type="NCBIfam" id="NF004018">
    <property type="entry name" value="PRK05480.1"/>
    <property type="match status" value="1"/>
</dbReference>
<dbReference type="NCBIfam" id="TIGR00235">
    <property type="entry name" value="udk"/>
    <property type="match status" value="1"/>
</dbReference>
<dbReference type="PANTHER" id="PTHR10285">
    <property type="entry name" value="URIDINE KINASE"/>
    <property type="match status" value="1"/>
</dbReference>
<dbReference type="Pfam" id="PF00485">
    <property type="entry name" value="PRK"/>
    <property type="match status" value="1"/>
</dbReference>
<dbReference type="PRINTS" id="PR00988">
    <property type="entry name" value="URIDINKINASE"/>
</dbReference>
<dbReference type="SUPFAM" id="SSF52540">
    <property type="entry name" value="P-loop containing nucleoside triphosphate hydrolases"/>
    <property type="match status" value="1"/>
</dbReference>
<sequence>MKATTIIGIAGGSGSGKTTVTNEIMKNLEGHSVALLAQDYYYKDQKHLTFDERLETNYDHPFAFDNDLLIENLKDLKNGKAVEVPTYDYASHTRSDITIDFKPKDVIIVEGIFALENKVLRDMMDVKIYVDTDADLRILRRLTRDTKERGRSMDSVINQYLSVVRPMHDQFIEPTKKYADIIIPEGGSNKVAIDIMTTKIQSLVSKQ</sequence>
<comment type="catalytic activity">
    <reaction evidence="1">
        <text>uridine + ATP = UMP + ADP + H(+)</text>
        <dbReference type="Rhea" id="RHEA:16825"/>
        <dbReference type="ChEBI" id="CHEBI:15378"/>
        <dbReference type="ChEBI" id="CHEBI:16704"/>
        <dbReference type="ChEBI" id="CHEBI:30616"/>
        <dbReference type="ChEBI" id="CHEBI:57865"/>
        <dbReference type="ChEBI" id="CHEBI:456216"/>
        <dbReference type="EC" id="2.7.1.48"/>
    </reaction>
</comment>
<comment type="catalytic activity">
    <reaction evidence="1">
        <text>cytidine + ATP = CMP + ADP + H(+)</text>
        <dbReference type="Rhea" id="RHEA:24674"/>
        <dbReference type="ChEBI" id="CHEBI:15378"/>
        <dbReference type="ChEBI" id="CHEBI:17562"/>
        <dbReference type="ChEBI" id="CHEBI:30616"/>
        <dbReference type="ChEBI" id="CHEBI:60377"/>
        <dbReference type="ChEBI" id="CHEBI:456216"/>
        <dbReference type="EC" id="2.7.1.48"/>
    </reaction>
</comment>
<comment type="pathway">
    <text evidence="1">Pyrimidine metabolism; CTP biosynthesis via salvage pathway; CTP from cytidine: step 1/3.</text>
</comment>
<comment type="pathway">
    <text evidence="1">Pyrimidine metabolism; UMP biosynthesis via salvage pathway; UMP from uridine: step 1/1.</text>
</comment>
<comment type="subcellular location">
    <subcellularLocation>
        <location evidence="1">Cytoplasm</location>
    </subcellularLocation>
</comment>
<comment type="similarity">
    <text evidence="1">Belongs to the uridine kinase family.</text>
</comment>
<protein>
    <recommendedName>
        <fullName evidence="1">Uridine kinase</fullName>
        <ecNumber evidence="1">2.7.1.48</ecNumber>
    </recommendedName>
    <alternativeName>
        <fullName evidence="1">Cytidine monophosphokinase</fullName>
    </alternativeName>
    <alternativeName>
        <fullName evidence="1">Uridine monophosphokinase</fullName>
    </alternativeName>
</protein>
<name>URK_STAAE</name>
<gene>
    <name evidence="1" type="primary">udk</name>
    <name type="ordered locus">NWMN_1512</name>
</gene>
<evidence type="ECO:0000255" key="1">
    <source>
        <dbReference type="HAMAP-Rule" id="MF_00551"/>
    </source>
</evidence>
<reference key="1">
    <citation type="journal article" date="2008" name="J. Bacteriol.">
        <title>Genome sequence of Staphylococcus aureus strain Newman and comparative analysis of staphylococcal genomes: polymorphism and evolution of two major pathogenicity islands.</title>
        <authorList>
            <person name="Baba T."/>
            <person name="Bae T."/>
            <person name="Schneewind O."/>
            <person name="Takeuchi F."/>
            <person name="Hiramatsu K."/>
        </authorList>
    </citation>
    <scope>NUCLEOTIDE SEQUENCE [LARGE SCALE GENOMIC DNA]</scope>
    <source>
        <strain>Newman</strain>
    </source>
</reference>
<organism>
    <name type="scientific">Staphylococcus aureus (strain Newman)</name>
    <dbReference type="NCBI Taxonomy" id="426430"/>
    <lineage>
        <taxon>Bacteria</taxon>
        <taxon>Bacillati</taxon>
        <taxon>Bacillota</taxon>
        <taxon>Bacilli</taxon>
        <taxon>Bacillales</taxon>
        <taxon>Staphylococcaceae</taxon>
        <taxon>Staphylococcus</taxon>
    </lineage>
</organism>